<gene>
    <name type="primary">ANGPT1</name>
    <name type="synonym">KIAA0003</name>
</gene>
<keyword id="KW-0002">3D-structure</keyword>
<keyword id="KW-0025">Alternative splicing</keyword>
<keyword id="KW-0037">Angiogenesis</keyword>
<keyword id="KW-0175">Coiled coil</keyword>
<keyword id="KW-0217">Developmental protein</keyword>
<keyword id="KW-0221">Differentiation</keyword>
<keyword id="KW-0225">Disease variant</keyword>
<keyword id="KW-1015">Disulfide bond</keyword>
<keyword id="KW-0325">Glycoprotein</keyword>
<keyword id="KW-1267">Proteomics identification</keyword>
<keyword id="KW-1185">Reference proteome</keyword>
<keyword id="KW-0964">Secreted</keyword>
<keyword id="KW-0732">Signal</keyword>
<dbReference type="EMBL" id="U83508">
    <property type="protein sequence ID" value="AAB50557.1"/>
    <property type="molecule type" value="mRNA"/>
</dbReference>
<dbReference type="EMBL" id="AB084454">
    <property type="protein sequence ID" value="BAB91325.1"/>
    <property type="molecule type" value="mRNA"/>
</dbReference>
<dbReference type="EMBL" id="AY121504">
    <property type="protein sequence ID" value="AAM81745.1"/>
    <property type="molecule type" value="mRNA"/>
</dbReference>
<dbReference type="EMBL" id="AY124380">
    <property type="protein sequence ID" value="AAM92271.1"/>
    <property type="molecule type" value="mRNA"/>
</dbReference>
<dbReference type="EMBL" id="D13628">
    <property type="protein sequence ID" value="BAA02793.2"/>
    <property type="status" value="ALT_INIT"/>
    <property type="molecule type" value="mRNA"/>
</dbReference>
<dbReference type="EMBL" id="BX648814">
    <property type="protein sequence ID" value="CAI45984.1"/>
    <property type="molecule type" value="mRNA"/>
</dbReference>
<dbReference type="EMBL" id="AC091010">
    <property type="status" value="NOT_ANNOTATED_CDS"/>
    <property type="molecule type" value="Genomic_DNA"/>
</dbReference>
<dbReference type="EMBL" id="AP000428">
    <property type="status" value="NOT_ANNOTATED_CDS"/>
    <property type="molecule type" value="Genomic_DNA"/>
</dbReference>
<dbReference type="EMBL" id="AP003480">
    <property type="status" value="NOT_ANNOTATED_CDS"/>
    <property type="molecule type" value="Genomic_DNA"/>
</dbReference>
<dbReference type="EMBL" id="CH471060">
    <property type="protein sequence ID" value="EAW91909.1"/>
    <property type="molecule type" value="Genomic_DNA"/>
</dbReference>
<dbReference type="EMBL" id="BC152411">
    <property type="protein sequence ID" value="AAI52412.1"/>
    <property type="molecule type" value="mRNA"/>
</dbReference>
<dbReference type="EMBL" id="BC152419">
    <property type="protein sequence ID" value="AAI52420.1"/>
    <property type="molecule type" value="mRNA"/>
</dbReference>
<dbReference type="CCDS" id="CCDS56551.1">
    <molecule id="Q15389-2"/>
</dbReference>
<dbReference type="CCDS" id="CCDS6306.1">
    <molecule id="Q15389-1"/>
</dbReference>
<dbReference type="RefSeq" id="NP_001137.2">
    <molecule id="Q15389-1"/>
    <property type="nucleotide sequence ID" value="NM_001146.4"/>
</dbReference>
<dbReference type="RefSeq" id="NP_001186788.1">
    <molecule id="Q15389-2"/>
    <property type="nucleotide sequence ID" value="NM_001199859.3"/>
</dbReference>
<dbReference type="RefSeq" id="NP_001300980.1">
    <property type="nucleotide sequence ID" value="NM_001314051.1"/>
</dbReference>
<dbReference type="PDB" id="4EPU">
    <property type="method" value="X-ray"/>
    <property type="resolution" value="2.10 A"/>
    <property type="chains" value="A/B=282-497"/>
</dbReference>
<dbReference type="PDB" id="4JYO">
    <property type="method" value="X-ray"/>
    <property type="resolution" value="2.50 A"/>
    <property type="chains" value="X=280-498"/>
</dbReference>
<dbReference type="PDB" id="4K0V">
    <property type="method" value="X-ray"/>
    <property type="resolution" value="4.51 A"/>
    <property type="chains" value="B=280-498"/>
</dbReference>
<dbReference type="PDBsum" id="4EPU"/>
<dbReference type="PDBsum" id="4JYO"/>
<dbReference type="PDBsum" id="4K0V"/>
<dbReference type="SMR" id="Q15389"/>
<dbReference type="BioGRID" id="106781">
    <property type="interactions" value="14"/>
</dbReference>
<dbReference type="CORUM" id="Q15389"/>
<dbReference type="FunCoup" id="Q15389">
    <property type="interactions" value="925"/>
</dbReference>
<dbReference type="IntAct" id="Q15389">
    <property type="interactions" value="11"/>
</dbReference>
<dbReference type="MINT" id="Q15389"/>
<dbReference type="STRING" id="9606.ENSP00000428340"/>
<dbReference type="ChEMBL" id="CHEMBL3217395"/>
<dbReference type="UniLectin" id="Q15389"/>
<dbReference type="GlyCosmos" id="Q15389">
    <property type="glycosylation" value="5 sites, No reported glycans"/>
</dbReference>
<dbReference type="GlyGen" id="Q15389">
    <property type="glycosylation" value="6 sites, 6 N-linked glycans (1 site), 1 O-linked glycan (1 site)"/>
</dbReference>
<dbReference type="iPTMnet" id="Q15389"/>
<dbReference type="PhosphoSitePlus" id="Q15389"/>
<dbReference type="BioMuta" id="ANGPT1"/>
<dbReference type="DMDM" id="12229574"/>
<dbReference type="jPOST" id="Q15389"/>
<dbReference type="MassIVE" id="Q15389"/>
<dbReference type="PaxDb" id="9606-ENSP00000428340"/>
<dbReference type="PeptideAtlas" id="Q15389"/>
<dbReference type="ProteomicsDB" id="60559">
    <molecule id="Q15389-1"/>
</dbReference>
<dbReference type="ABCD" id="Q15389">
    <property type="antibodies" value="4 sequenced antibodies"/>
</dbReference>
<dbReference type="Antibodypedia" id="4501">
    <property type="antibodies" value="699 antibodies from 39 providers"/>
</dbReference>
<dbReference type="DNASU" id="284"/>
<dbReference type="Ensembl" id="ENST00000297450.7">
    <molecule id="Q15389-2"/>
    <property type="protein sequence ID" value="ENSP00000297450.3"/>
    <property type="gene ID" value="ENSG00000154188.10"/>
</dbReference>
<dbReference type="Ensembl" id="ENST00000517746.6">
    <molecule id="Q15389-1"/>
    <property type="protein sequence ID" value="ENSP00000428340.1"/>
    <property type="gene ID" value="ENSG00000154188.10"/>
</dbReference>
<dbReference type="GeneID" id="284"/>
<dbReference type="KEGG" id="hsa:284"/>
<dbReference type="MANE-Select" id="ENST00000517746.6">
    <property type="protein sequence ID" value="ENSP00000428340.1"/>
    <property type="RefSeq nucleotide sequence ID" value="NM_001146.5"/>
    <property type="RefSeq protein sequence ID" value="NP_001137.2"/>
</dbReference>
<dbReference type="UCSC" id="uc003ymn.4">
    <molecule id="Q15389-1"/>
    <property type="organism name" value="human"/>
</dbReference>
<dbReference type="AGR" id="HGNC:484"/>
<dbReference type="CTD" id="284"/>
<dbReference type="DisGeNET" id="284"/>
<dbReference type="GeneCards" id="ANGPT1"/>
<dbReference type="HGNC" id="HGNC:484">
    <property type="gene designation" value="ANGPT1"/>
</dbReference>
<dbReference type="HPA" id="ENSG00000154188">
    <property type="expression patterns" value="Tissue enhanced (seminal)"/>
</dbReference>
<dbReference type="MalaCards" id="ANGPT1"/>
<dbReference type="MIM" id="601667">
    <property type="type" value="gene"/>
</dbReference>
<dbReference type="MIM" id="619361">
    <property type="type" value="phenotype"/>
</dbReference>
<dbReference type="neXtProt" id="NX_Q15389"/>
<dbReference type="OpenTargets" id="ENSG00000154188"/>
<dbReference type="Orphanet" id="599418">
    <property type="disease" value="Hereditary angioedema with normal C1Inh not related to F12 or PLG variant"/>
</dbReference>
<dbReference type="PharmGKB" id="PA24791"/>
<dbReference type="VEuPathDB" id="HostDB:ENSG00000154188"/>
<dbReference type="eggNOG" id="KOG2579">
    <property type="taxonomic scope" value="Eukaryota"/>
</dbReference>
<dbReference type="GeneTree" id="ENSGT00940000158117"/>
<dbReference type="HOGENOM" id="CLU_038628_3_1_1"/>
<dbReference type="InParanoid" id="Q15389"/>
<dbReference type="OMA" id="QYNANAL"/>
<dbReference type="OrthoDB" id="7735366at2759"/>
<dbReference type="PAN-GO" id="Q15389">
    <property type="GO annotations" value="5 GO annotations based on evolutionary models"/>
</dbReference>
<dbReference type="PhylomeDB" id="Q15389"/>
<dbReference type="TreeFam" id="TF336658"/>
<dbReference type="PathwayCommons" id="Q15389"/>
<dbReference type="Reactome" id="R-HSA-210993">
    <property type="pathway name" value="Tie2 Signaling"/>
</dbReference>
<dbReference type="Reactome" id="R-HSA-5673001">
    <property type="pathway name" value="RAF/MAP kinase cascade"/>
</dbReference>
<dbReference type="SignaLink" id="Q15389"/>
<dbReference type="SIGNOR" id="Q15389"/>
<dbReference type="BioGRID-ORCS" id="284">
    <property type="hits" value="8 hits in 1123 CRISPR screens"/>
</dbReference>
<dbReference type="ChiTaRS" id="ANGPT1">
    <property type="organism name" value="human"/>
</dbReference>
<dbReference type="EvolutionaryTrace" id="Q15389"/>
<dbReference type="GeneWiki" id="Angiopoietin_1"/>
<dbReference type="GenomeRNAi" id="284"/>
<dbReference type="Pharos" id="Q15389">
    <property type="development level" value="Tbio"/>
</dbReference>
<dbReference type="PRO" id="PR:Q15389"/>
<dbReference type="Proteomes" id="UP000005640">
    <property type="component" value="Chromosome 8"/>
</dbReference>
<dbReference type="RNAct" id="Q15389">
    <property type="molecule type" value="protein"/>
</dbReference>
<dbReference type="Bgee" id="ENSG00000154188">
    <property type="expression patterns" value="Expressed in lower lobe of lung and 173 other cell types or tissues"/>
</dbReference>
<dbReference type="ExpressionAtlas" id="Q15389">
    <property type="expression patterns" value="baseline and differential"/>
</dbReference>
<dbReference type="GO" id="GO:0062023">
    <property type="term" value="C:collagen-containing extracellular matrix"/>
    <property type="evidence" value="ECO:0000318"/>
    <property type="project" value="GO_Central"/>
</dbReference>
<dbReference type="GO" id="GO:0070062">
    <property type="term" value="C:extracellular exosome"/>
    <property type="evidence" value="ECO:0007005"/>
    <property type="project" value="UniProtKB"/>
</dbReference>
<dbReference type="GO" id="GO:0005576">
    <property type="term" value="C:extracellular region"/>
    <property type="evidence" value="ECO:0000304"/>
    <property type="project" value="Reactome"/>
</dbReference>
<dbReference type="GO" id="GO:0005615">
    <property type="term" value="C:extracellular space"/>
    <property type="evidence" value="ECO:0000314"/>
    <property type="project" value="UniProtKB"/>
</dbReference>
<dbReference type="GO" id="GO:0045121">
    <property type="term" value="C:membrane raft"/>
    <property type="evidence" value="ECO:0000314"/>
    <property type="project" value="UniProtKB"/>
</dbReference>
<dbReference type="GO" id="GO:0005902">
    <property type="term" value="C:microvillus"/>
    <property type="evidence" value="ECO:0000314"/>
    <property type="project" value="UniProtKB"/>
</dbReference>
<dbReference type="GO" id="GO:0005886">
    <property type="term" value="C:plasma membrane"/>
    <property type="evidence" value="ECO:0000314"/>
    <property type="project" value="UniProtKB"/>
</dbReference>
<dbReference type="GO" id="GO:0042802">
    <property type="term" value="F:identical protein binding"/>
    <property type="evidence" value="ECO:0000353"/>
    <property type="project" value="IntAct"/>
</dbReference>
<dbReference type="GO" id="GO:0048018">
    <property type="term" value="F:receptor ligand activity"/>
    <property type="evidence" value="ECO:0000314"/>
    <property type="project" value="UniProt"/>
</dbReference>
<dbReference type="GO" id="GO:0030971">
    <property type="term" value="F:receptor tyrosine kinase binding"/>
    <property type="evidence" value="ECO:0000353"/>
    <property type="project" value="UniProtKB"/>
</dbReference>
<dbReference type="GO" id="GO:0007171">
    <property type="term" value="P:activation of transmembrane receptor protein tyrosine kinase activity"/>
    <property type="evidence" value="ECO:0000314"/>
    <property type="project" value="UniProtKB"/>
</dbReference>
<dbReference type="GO" id="GO:0001525">
    <property type="term" value="P:angiogenesis"/>
    <property type="evidence" value="ECO:0000318"/>
    <property type="project" value="GO_Central"/>
</dbReference>
<dbReference type="GO" id="GO:0007596">
    <property type="term" value="P:blood coagulation"/>
    <property type="evidence" value="ECO:0007669"/>
    <property type="project" value="InterPro"/>
</dbReference>
<dbReference type="GO" id="GO:0031589">
    <property type="term" value="P:cell-substrate adhesion"/>
    <property type="evidence" value="ECO:0007669"/>
    <property type="project" value="Ensembl"/>
</dbReference>
<dbReference type="GO" id="GO:0072012">
    <property type="term" value="P:glomerulus vasculature development"/>
    <property type="evidence" value="ECO:0000250"/>
    <property type="project" value="UniProtKB"/>
</dbReference>
<dbReference type="GO" id="GO:0030097">
    <property type="term" value="P:hemopoiesis"/>
    <property type="evidence" value="ECO:0007669"/>
    <property type="project" value="Ensembl"/>
</dbReference>
<dbReference type="GO" id="GO:0030210">
    <property type="term" value="P:heparin proteoglycan biosynthetic process"/>
    <property type="evidence" value="ECO:0000314"/>
    <property type="project" value="UniProtKB"/>
</dbReference>
<dbReference type="GO" id="GO:0001701">
    <property type="term" value="P:in utero embryonic development"/>
    <property type="evidence" value="ECO:0007669"/>
    <property type="project" value="Ensembl"/>
</dbReference>
<dbReference type="GO" id="GO:0043066">
    <property type="term" value="P:negative regulation of apoptotic process"/>
    <property type="evidence" value="ECO:0000314"/>
    <property type="project" value="UniProtKB"/>
</dbReference>
<dbReference type="GO" id="GO:0007162">
    <property type="term" value="P:negative regulation of cell adhesion"/>
    <property type="evidence" value="ECO:0000314"/>
    <property type="project" value="UniProtKB"/>
</dbReference>
<dbReference type="GO" id="GO:0002719">
    <property type="term" value="P:negative regulation of cytokine production involved in immune response"/>
    <property type="evidence" value="ECO:0007669"/>
    <property type="project" value="Ensembl"/>
</dbReference>
<dbReference type="GO" id="GO:2000352">
    <property type="term" value="P:negative regulation of endothelial cell apoptotic process"/>
    <property type="evidence" value="ECO:0000314"/>
    <property type="project" value="UniProtKB"/>
</dbReference>
<dbReference type="GO" id="GO:0043524">
    <property type="term" value="P:negative regulation of neuron apoptotic process"/>
    <property type="evidence" value="ECO:0007669"/>
    <property type="project" value="Ensembl"/>
</dbReference>
<dbReference type="GO" id="GO:0042308">
    <property type="term" value="P:negative regulation of protein import into nucleus"/>
    <property type="evidence" value="ECO:0007669"/>
    <property type="project" value="Ensembl"/>
</dbReference>
<dbReference type="GO" id="GO:1900747">
    <property type="term" value="P:negative regulation of vascular endothelial growth factor signaling pathway"/>
    <property type="evidence" value="ECO:0000315"/>
    <property type="project" value="ARUK-UCL"/>
</dbReference>
<dbReference type="GO" id="GO:0043116">
    <property type="term" value="P:negative regulation of vascular permeability"/>
    <property type="evidence" value="ECO:0000314"/>
    <property type="project" value="UniProtKB"/>
</dbReference>
<dbReference type="GO" id="GO:0051402">
    <property type="term" value="P:neuron apoptotic process"/>
    <property type="evidence" value="ECO:0007669"/>
    <property type="project" value="Ensembl"/>
</dbReference>
<dbReference type="GO" id="GO:0050918">
    <property type="term" value="P:positive chemotaxis"/>
    <property type="evidence" value="ECO:0000314"/>
    <property type="project" value="UniProtKB"/>
</dbReference>
<dbReference type="GO" id="GO:0043536">
    <property type="term" value="P:positive regulation of blood vessel endothelial cell migration"/>
    <property type="evidence" value="ECO:0000314"/>
    <property type="project" value="UniProtKB"/>
</dbReference>
<dbReference type="GO" id="GO:1905605">
    <property type="term" value="P:positive regulation of blood-brain barrier permeability"/>
    <property type="evidence" value="ECO:0000315"/>
    <property type="project" value="ARUK-UCL"/>
</dbReference>
<dbReference type="GO" id="GO:0045785">
    <property type="term" value="P:positive regulation of cell adhesion"/>
    <property type="evidence" value="ECO:0007669"/>
    <property type="project" value="Ensembl"/>
</dbReference>
<dbReference type="GO" id="GO:0050820">
    <property type="term" value="P:positive regulation of coagulation"/>
    <property type="evidence" value="ECO:0000314"/>
    <property type="project" value="UniProt"/>
</dbReference>
<dbReference type="GO" id="GO:0010595">
    <property type="term" value="P:positive regulation of endothelial cell migration"/>
    <property type="evidence" value="ECO:0000314"/>
    <property type="project" value="UniProtKB"/>
</dbReference>
<dbReference type="GO" id="GO:0070374">
    <property type="term" value="P:positive regulation of ERK1 and ERK2 cascade"/>
    <property type="evidence" value="ECO:0000314"/>
    <property type="project" value="UniProtKB"/>
</dbReference>
<dbReference type="GO" id="GO:0010628">
    <property type="term" value="P:positive regulation of gene expression"/>
    <property type="evidence" value="ECO:0000315"/>
    <property type="project" value="ARUK-UCL"/>
</dbReference>
<dbReference type="GO" id="GO:0050731">
    <property type="term" value="P:positive regulation of peptidyl-tyrosine phosphorylation"/>
    <property type="evidence" value="ECO:0000314"/>
    <property type="project" value="UniProtKB"/>
</dbReference>
<dbReference type="GO" id="GO:0051897">
    <property type="term" value="P:positive regulation of phosphatidylinositol 3-kinase/protein kinase B signal transduction"/>
    <property type="evidence" value="ECO:0000314"/>
    <property type="project" value="UniProtKB"/>
</dbReference>
<dbReference type="GO" id="GO:0031398">
    <property type="term" value="P:positive regulation of protein ubiquitination"/>
    <property type="evidence" value="ECO:0000314"/>
    <property type="project" value="UniProtKB"/>
</dbReference>
<dbReference type="GO" id="GO:0002092">
    <property type="term" value="P:positive regulation of receptor internalization"/>
    <property type="evidence" value="ECO:0000314"/>
    <property type="project" value="UniProtKB"/>
</dbReference>
<dbReference type="GO" id="GO:0034394">
    <property type="term" value="P:protein localization to cell surface"/>
    <property type="evidence" value="ECO:0000314"/>
    <property type="project" value="UniProtKB"/>
</dbReference>
<dbReference type="GO" id="GO:0043122">
    <property type="term" value="P:regulation of canonical NF-kappaB signal transduction"/>
    <property type="evidence" value="ECO:0007669"/>
    <property type="project" value="Ensembl"/>
</dbReference>
<dbReference type="GO" id="GO:2000446">
    <property type="term" value="P:regulation of macrophage migration inhibitory factor signaling pathway"/>
    <property type="evidence" value="ECO:0007669"/>
    <property type="project" value="Ensembl"/>
</dbReference>
<dbReference type="GO" id="GO:0014842">
    <property type="term" value="P:regulation of skeletal muscle satellite cell proliferation"/>
    <property type="evidence" value="ECO:0000314"/>
    <property type="project" value="UniProtKB"/>
</dbReference>
<dbReference type="GO" id="GO:0032680">
    <property type="term" value="P:regulation of tumor necrosis factor production"/>
    <property type="evidence" value="ECO:0007669"/>
    <property type="project" value="Ensembl"/>
</dbReference>
<dbReference type="GO" id="GO:0002040">
    <property type="term" value="P:sprouting angiogenesis"/>
    <property type="evidence" value="ECO:0000314"/>
    <property type="project" value="UniProtKB"/>
</dbReference>
<dbReference type="GO" id="GO:0048014">
    <property type="term" value="P:Tie signaling pathway"/>
    <property type="evidence" value="ECO:0000314"/>
    <property type="project" value="UniProtKB"/>
</dbReference>
<dbReference type="CDD" id="cd00087">
    <property type="entry name" value="FReD"/>
    <property type="match status" value="1"/>
</dbReference>
<dbReference type="FunFam" id="3.90.215.10:FF:000005">
    <property type="entry name" value="angiopoietin-1 isoform X2"/>
    <property type="match status" value="1"/>
</dbReference>
<dbReference type="FunFam" id="4.10.530.10:FF:000001">
    <property type="entry name" value="angiopoietin-2 isoform X1"/>
    <property type="match status" value="1"/>
</dbReference>
<dbReference type="Gene3D" id="3.90.215.10">
    <property type="entry name" value="Gamma Fibrinogen, chain A, domain 1"/>
    <property type="match status" value="1"/>
</dbReference>
<dbReference type="Gene3D" id="4.10.530.10">
    <property type="entry name" value="Gamma-fibrinogen Carboxyl Terminal Fragment, domain 2"/>
    <property type="match status" value="1"/>
</dbReference>
<dbReference type="InterPro" id="IPR037579">
    <property type="entry name" value="FIB_ANG-like"/>
</dbReference>
<dbReference type="InterPro" id="IPR036056">
    <property type="entry name" value="Fibrinogen-like_C"/>
</dbReference>
<dbReference type="InterPro" id="IPR014716">
    <property type="entry name" value="Fibrinogen_a/b/g_C_1"/>
</dbReference>
<dbReference type="InterPro" id="IPR002181">
    <property type="entry name" value="Fibrinogen_a/b/g_C_dom"/>
</dbReference>
<dbReference type="InterPro" id="IPR020837">
    <property type="entry name" value="Fibrinogen_CS"/>
</dbReference>
<dbReference type="NCBIfam" id="NF040941">
    <property type="entry name" value="GGGWT_bact"/>
    <property type="match status" value="1"/>
</dbReference>
<dbReference type="PANTHER" id="PTHR47221">
    <property type="entry name" value="FIBRINOGEN ALPHA CHAIN"/>
    <property type="match status" value="1"/>
</dbReference>
<dbReference type="PANTHER" id="PTHR47221:SF6">
    <property type="entry name" value="FIBRINOGEN ALPHA CHAIN"/>
    <property type="match status" value="1"/>
</dbReference>
<dbReference type="Pfam" id="PF25443">
    <property type="entry name" value="ANG-1"/>
    <property type="match status" value="1"/>
</dbReference>
<dbReference type="Pfam" id="PF00147">
    <property type="entry name" value="Fibrinogen_C"/>
    <property type="match status" value="1"/>
</dbReference>
<dbReference type="SMART" id="SM00186">
    <property type="entry name" value="FBG"/>
    <property type="match status" value="1"/>
</dbReference>
<dbReference type="SUPFAM" id="SSF56496">
    <property type="entry name" value="Fibrinogen C-terminal domain-like"/>
    <property type="match status" value="1"/>
</dbReference>
<dbReference type="PROSITE" id="PS00514">
    <property type="entry name" value="FIBRINOGEN_C_1"/>
    <property type="match status" value="1"/>
</dbReference>
<dbReference type="PROSITE" id="PS51406">
    <property type="entry name" value="FIBRINOGEN_C_2"/>
    <property type="match status" value="1"/>
</dbReference>
<sequence>MTVFLSFAFLAAILTHIGCSNQRRSPENSGRRYNRIQHGQCAYTFILPEHDGNCRESTTDQYNTNALQRDAPHVEPDFSSQKLQHLEHVMENYTQWLQKLENYIVENMKSEMAQIQQNAVQNHTATMLEIGTSLLSQTAEQTRKLTDVETQVLNQTSRLEIQLLENSLSTYKLEKQLLQQTNEILKIHEKNSLLEHKILEMEGKHKEELDTLKEEKENLQGLVTRQTYIIQELEKQLNRATTNNSVLQKQQLELMDTVHNLVNLCTKEGVLLKGGKREEEKPFRDCADVYQAGFNKSGIYTIYINNMPEPKKVFCNMDVNGGGWTVIQHREDGSLDFQRGWKEYKMGFGNPSGEYWLGNEFIFAITSQRQYMLRIELMDWEGNRAYSQYDRFHIGNEKQNYRLYLKGHTGTAGKQSSLILHGADFSTKDADNDNCMCKCALMLTGGWWFDACGPSNLNGMFYTAGQNHGKLNGIKWHYFKGPSYSLRSTTMMIRPLDF</sequence>
<accession>Q15389</accession>
<accession>Q5HYA0</accession>
<protein>
    <recommendedName>
        <fullName>Angiopoietin-1</fullName>
        <shortName>ANG-1</shortName>
    </recommendedName>
</protein>
<comment type="function">
    <text evidence="5 6 7 10 12">Binds and activates TEK/TIE2 receptor by inducing its dimerization and tyrosine phosphorylation. Plays an important role in the regulation of angiogenesis, endothelial cell survival, proliferation, migration, adhesion and cell spreading, reorganization of the actin cytoskeleton, but also maintenance of vascular quiescence. Required for normal angiogenesis and heart development during embryogenesis. After birth, activates or inhibits angiogenesis, depending on the context. Inhibits angiogenesis and promotes vascular stability in quiescent vessels, where endothelial cells have tight contacts. In quiescent vessels, ANGPT1 oligomers recruit TEK to cell-cell contacts, forming complexes with TEK molecules from adjoining cells, and this leads to preferential activation of phosphatidylinositol 3-kinase and the AKT1 signaling cascades. In migrating endothelial cells that lack cell-cell adhesions, ANGT1 recruits TEK to contacts with the extracellular matrix, leading to the formation of focal adhesion complexes, activation of PTK2/FAK and of the downstream kinases MAPK1/ERK2 and MAPK3/ERK1, and ultimately to the stimulation of sprouting angiogenesis. Mediates blood vessel maturation/stability. Implicated in endothelial developmental processes later and distinct from that of VEGF. Appears to play a crucial role in mediating reciprocal interactions between the endothelium and surrounding matrix and mesenchyme.</text>
</comment>
<comment type="subunit">
    <text evidence="1 4 5 8 9 10 12">Homooligomer (PubMed:28601681). Interacts with TEK/TIE2 (PubMed:28601681, PubMed:30689269). Interacts with SVEP1/polydom (By similarity). Interacts with THBD; this interaction significantly inhibits the generation of activated PC and TAFIa/CPB2 by the thrombin/thrombomodulin complex (PubMed:29323190).</text>
</comment>
<comment type="interaction">
    <interactant intactId="EBI-2922365">
        <id>Q15389</id>
    </interactant>
    <interactant intactId="EBI-2922365">
        <id>Q15389</id>
        <label>ANGPT1</label>
    </interactant>
    <organismsDiffer>false</organismsDiffer>
    <experiments>3</experiments>
</comment>
<comment type="interaction">
    <interactant intactId="EBI-2922365">
        <id>Q15389</id>
    </interactant>
    <interactant intactId="EBI-2257090">
        <id>Q02763</id>
        <label>TEK</label>
    </interactant>
    <organismsDiffer>false</organismsDiffer>
    <experiments>2</experiments>
</comment>
<comment type="interaction">
    <interactant intactId="EBI-10692491">
        <id>Q15389-2</id>
    </interactant>
    <interactant intactId="EBI-722813">
        <id>Q13387</id>
        <label>MAPK8IP2</label>
    </interactant>
    <organismsDiffer>false</organismsDiffer>
    <experiments>3</experiments>
</comment>
<comment type="subcellular location">
    <subcellularLocation>
        <location evidence="11">Secreted</location>
    </subcellularLocation>
</comment>
<comment type="alternative products">
    <event type="alternative splicing"/>
    <isoform>
        <id>Q15389-1</id>
        <name>1</name>
        <sequence type="displayed"/>
    </isoform>
    <isoform>
        <id>Q15389-2</id>
        <name>2</name>
        <name>Gly-269 del</name>
        <sequence type="described" ref="VSP_046324"/>
    </isoform>
</comment>
<comment type="PTM">
    <text>Glycosylated.</text>
</comment>
<comment type="disease" evidence="8 10">
    <disease id="DI-06125">
        <name>Angioedema, hereditary, 5</name>
        <acronym>HAE5</acronym>
        <description>A form of angioedema, a disorder characterized by episodic local swelling involving subcutaneous or submucous tissue of the upper respiratory and gastrointestinal tracts, face, extremities, and genitalia. HAE5 is an autosomal dominant form characterized by onset of episodic swelling of the face, lips, hands, and abdomen in the second decade of life.</description>
        <dbReference type="MIM" id="619361"/>
    </disease>
    <text>The disease is caused by variants affecting the gene represented in this entry.</text>
</comment>
<comment type="miscellaneous">
    <text>It may have a potential therapeutic utility since it can be used for specifically targeting tumor vasculature or for promoting angiogenic processes in certain organs such as an ischemic heart.</text>
</comment>
<comment type="sequence caution" evidence="16">
    <conflict type="erroneous initiation">
        <sequence resource="EMBL-CDS" id="BAA02793"/>
    </conflict>
</comment>
<comment type="online information" name="Wikipedia">
    <link uri="https://en.wikipedia.org/wiki/Angiopoietin"/>
    <text>Angiopoietin entry</text>
</comment>
<reference key="1">
    <citation type="journal article" date="1996" name="Cell">
        <title>Isolation of angiopoietin-1, a ligand for the TIE2 receptor, by secretion-trap expression cloning.</title>
        <authorList>
            <person name="Davis S."/>
            <person name="Aldrich T.H."/>
            <person name="Jones P.F."/>
            <person name="Acheson A."/>
            <person name="Compton D.L."/>
            <person name="Jain V."/>
            <person name="Ryan T.E."/>
            <person name="Bruno J."/>
            <person name="Radziejewski C."/>
            <person name="Maisonpierre P.C."/>
            <person name="Yancopoulos G.D."/>
        </authorList>
    </citation>
    <scope>NUCLEOTIDE SEQUENCE [MRNA] (ISOFORM 2)</scope>
    <scope>SUBCELLULAR LOCATION</scope>
    <source>
        <tissue>Fetal lung</tissue>
    </source>
</reference>
<reference key="2">
    <citation type="submission" date="2002-04" db="EMBL/GenBank/DDBJ databases">
        <title>Human angiopoietin-1 mRNA variant form.</title>
        <authorList>
            <person name="Nakatsukasa M."/>
            <person name="Komai K."/>
            <person name="Shiozawa S."/>
        </authorList>
    </citation>
    <scope>NUCLEOTIDE SEQUENCE [MRNA] (ISOFORM 2)</scope>
</reference>
<reference key="3">
    <citation type="submission" date="2002-06" db="EMBL/GenBank/DDBJ databases">
        <title>Human angiopoietin-1 mRNA variant forms.</title>
        <authorList>
            <person name="Shan Z.X."/>
            <person name="Yu X.Y."/>
            <person name="Lin Q.Y."/>
            <person name="Fu Y.H."/>
            <person name="Tan H.H."/>
            <person name="Zheng M."/>
            <person name="Lin S.G."/>
        </authorList>
    </citation>
    <scope>NUCLEOTIDE SEQUENCE [MRNA] (ISOFORM 2)</scope>
</reference>
<reference key="4">
    <citation type="journal article" date="1994" name="DNA Res.">
        <title>Prediction of the coding sequences of unidentified human genes. I. The coding sequences of 40 new genes (KIAA0001-KIAA0040) deduced by analysis of randomly sampled cDNA clones from human immature myeloid cell line KG-1.</title>
        <authorList>
            <person name="Nomura N."/>
            <person name="Miyajima N."/>
            <person name="Sazuka T."/>
            <person name="Tanaka A."/>
            <person name="Kawarabayasi Y."/>
            <person name="Sato S."/>
            <person name="Nagase T."/>
            <person name="Seki N."/>
            <person name="Ishikawa K."/>
            <person name="Tabata S."/>
        </authorList>
    </citation>
    <scope>NUCLEOTIDE SEQUENCE [LARGE SCALE MRNA] (ISOFORM 1)</scope>
    <source>
        <tissue>Bone marrow</tissue>
    </source>
</reference>
<reference key="5">
    <citation type="journal article" date="2007" name="BMC Genomics">
        <title>The full-ORF clone resource of the German cDNA consortium.</title>
        <authorList>
            <person name="Bechtel S."/>
            <person name="Rosenfelder H."/>
            <person name="Duda A."/>
            <person name="Schmidt C.P."/>
            <person name="Ernst U."/>
            <person name="Wellenreuther R."/>
            <person name="Mehrle A."/>
            <person name="Schuster C."/>
            <person name="Bahr A."/>
            <person name="Bloecker H."/>
            <person name="Heubner D."/>
            <person name="Hoerlein A."/>
            <person name="Michel G."/>
            <person name="Wedler H."/>
            <person name="Koehrer K."/>
            <person name="Ottenwaelder B."/>
            <person name="Poustka A."/>
            <person name="Wiemann S."/>
            <person name="Schupp I."/>
        </authorList>
    </citation>
    <scope>NUCLEOTIDE SEQUENCE [LARGE SCALE MRNA] (ISOFORM 1)</scope>
    <source>
        <tissue>Small intestine</tissue>
    </source>
</reference>
<reference key="6">
    <citation type="journal article" date="2006" name="Nature">
        <title>DNA sequence and analysis of human chromosome 8.</title>
        <authorList>
            <person name="Nusbaum C."/>
            <person name="Mikkelsen T.S."/>
            <person name="Zody M.C."/>
            <person name="Asakawa S."/>
            <person name="Taudien S."/>
            <person name="Garber M."/>
            <person name="Kodira C.D."/>
            <person name="Schueler M.G."/>
            <person name="Shimizu A."/>
            <person name="Whittaker C.A."/>
            <person name="Chang J.L."/>
            <person name="Cuomo C.A."/>
            <person name="Dewar K."/>
            <person name="FitzGerald M.G."/>
            <person name="Yang X."/>
            <person name="Allen N.R."/>
            <person name="Anderson S."/>
            <person name="Asakawa T."/>
            <person name="Blechschmidt K."/>
            <person name="Bloom T."/>
            <person name="Borowsky M.L."/>
            <person name="Butler J."/>
            <person name="Cook A."/>
            <person name="Corum B."/>
            <person name="DeArellano K."/>
            <person name="DeCaprio D."/>
            <person name="Dooley K.T."/>
            <person name="Dorris L. III"/>
            <person name="Engels R."/>
            <person name="Gloeckner G."/>
            <person name="Hafez N."/>
            <person name="Hagopian D.S."/>
            <person name="Hall J.L."/>
            <person name="Ishikawa S.K."/>
            <person name="Jaffe D.B."/>
            <person name="Kamat A."/>
            <person name="Kudoh J."/>
            <person name="Lehmann R."/>
            <person name="Lokitsang T."/>
            <person name="Macdonald P."/>
            <person name="Major J.E."/>
            <person name="Matthews C.D."/>
            <person name="Mauceli E."/>
            <person name="Menzel U."/>
            <person name="Mihalev A.H."/>
            <person name="Minoshima S."/>
            <person name="Murayama Y."/>
            <person name="Naylor J.W."/>
            <person name="Nicol R."/>
            <person name="Nguyen C."/>
            <person name="O'Leary S.B."/>
            <person name="O'Neill K."/>
            <person name="Parker S.C.J."/>
            <person name="Polley A."/>
            <person name="Raymond C.K."/>
            <person name="Reichwald K."/>
            <person name="Rodriguez J."/>
            <person name="Sasaki T."/>
            <person name="Schilhabel M."/>
            <person name="Siddiqui R."/>
            <person name="Smith C.L."/>
            <person name="Sneddon T.P."/>
            <person name="Talamas J.A."/>
            <person name="Tenzin P."/>
            <person name="Topham K."/>
            <person name="Venkataraman V."/>
            <person name="Wen G."/>
            <person name="Yamazaki S."/>
            <person name="Young S.K."/>
            <person name="Zeng Q."/>
            <person name="Zimmer A.R."/>
            <person name="Rosenthal A."/>
            <person name="Birren B.W."/>
            <person name="Platzer M."/>
            <person name="Shimizu N."/>
            <person name="Lander E.S."/>
        </authorList>
    </citation>
    <scope>NUCLEOTIDE SEQUENCE [LARGE SCALE GENOMIC DNA]</scope>
</reference>
<reference key="7">
    <citation type="journal article" date="2004" name="Genome Res.">
        <title>The status, quality, and expansion of the NIH full-length cDNA project: the Mammalian Gene Collection (MGC).</title>
        <authorList>
            <consortium name="The MGC Project Team"/>
        </authorList>
    </citation>
    <scope>NUCLEOTIDE SEQUENCE [LARGE SCALE MRNA] (ISOFORM 1)</scope>
</reference>
<reference key="8">
    <citation type="submission" date="2005-07" db="EMBL/GenBank/DDBJ databases">
        <authorList>
            <person name="Mural R.J."/>
            <person name="Istrail S."/>
            <person name="Sutton G."/>
            <person name="Florea L."/>
            <person name="Halpern A.L."/>
            <person name="Mobarry C.M."/>
            <person name="Lippert R."/>
            <person name="Walenz B."/>
            <person name="Shatkay H."/>
            <person name="Dew I."/>
            <person name="Miller J.R."/>
            <person name="Flanigan M.J."/>
            <person name="Edwards N.J."/>
            <person name="Bolanos R."/>
            <person name="Fasulo D."/>
            <person name="Halldorsson B.V."/>
            <person name="Hannenhalli S."/>
            <person name="Turner R."/>
            <person name="Yooseph S."/>
            <person name="Lu F."/>
            <person name="Nusskern D.R."/>
            <person name="Shue B.C."/>
            <person name="Zheng X.H."/>
            <person name="Zhong F."/>
            <person name="Delcher A.L."/>
            <person name="Huson D.H."/>
            <person name="Kravitz S.A."/>
            <person name="Mouchard L."/>
            <person name="Reinert K."/>
            <person name="Remington K.A."/>
            <person name="Clark A.G."/>
            <person name="Waterman M.S."/>
            <person name="Eichler E.E."/>
            <person name="Adams M.D."/>
            <person name="Hunkapiller M.W."/>
            <person name="Myers E.W."/>
            <person name="Venter J.C."/>
        </authorList>
    </citation>
    <scope>NUCLEOTIDE SEQUENCE [LARGE SCALE GENOMIC DNA]</scope>
</reference>
<reference key="9">
    <citation type="journal article" date="2002" name="DNA Res.">
        <title>Construction of expression-ready cDNA clones for KIAA genes: manual curation of 330 KIAA cDNA clones.</title>
        <authorList>
            <person name="Nakajima D."/>
            <person name="Okazaki N."/>
            <person name="Yamakawa H."/>
            <person name="Kikuno R."/>
            <person name="Ohara O."/>
            <person name="Nagase T."/>
        </authorList>
    </citation>
    <scope>SEQUENCE REVISION</scope>
</reference>
<reference key="10">
    <citation type="journal article" date="1997" name="Science">
        <title>Angiopoietin-2, a natural antagonist for Tie2 that disrupts in vivo angiogenesis.</title>
        <authorList>
            <person name="Maisonpierre P.C."/>
            <person name="Suri C."/>
            <person name="Jones P.F."/>
            <person name="Bartunkova S."/>
            <person name="Wiegand S.J."/>
            <person name="Radziejewski C."/>
            <person name="Compton D.L."/>
            <person name="McClain J."/>
            <person name="Aldrich T.H."/>
            <person name="Papadopoulos N."/>
            <person name="Daly T.J."/>
            <person name="Davis S."/>
            <person name="Sato T.N."/>
            <person name="Yancopoulos G.D."/>
        </authorList>
    </citation>
    <scope>FUNCTION</scope>
    <scope>INTERACTION WITH TEK</scope>
</reference>
<reference key="11">
    <citation type="journal article" date="2003" name="J. Biol. Chem.">
        <title>Angiopoietin-1 and angiopoietin-2 share the same binding domains in the Tie-2 receptor involving the first Ig-like loop and the epidermal growth factor-like repeats.</title>
        <authorList>
            <person name="Fiedler U."/>
            <person name="Krissl T."/>
            <person name="Koidl S."/>
            <person name="Weiss C."/>
            <person name="Koblizek T."/>
            <person name="Deutsch U."/>
            <person name="Martiny-Baron G."/>
            <person name="Marme D."/>
            <person name="Augustin H.G."/>
        </authorList>
    </citation>
    <scope>INTERACTION WITH TEK</scope>
</reference>
<reference key="12">
    <citation type="journal article" date="2004" name="FASEB J.">
        <title>Biological characterization of angiopoietin-3 and angiopoietin-4.</title>
        <authorList>
            <person name="Lee H.J."/>
            <person name="Cho C.H."/>
            <person name="Hwang S.J."/>
            <person name="Choi H.H."/>
            <person name="Kim K.T."/>
            <person name="Ahn S.Y."/>
            <person name="Kim J.H."/>
            <person name="Oh J.L."/>
            <person name="Lee G.M."/>
            <person name="Koh G.Y."/>
        </authorList>
    </citation>
    <scope>FUNCTION IN REGULATION OF ANGIOGENESIS; CELL SURVIVAL; CELL MIGRATION AND ACTIVATION OF AKT1</scope>
    <scope>INTERACTION WITH TEK/TIE2</scope>
</reference>
<reference key="13">
    <citation type="journal article" date="2008" name="Nat. Cell Biol.">
        <title>Differential function of Tie2 at cell-cell contacts and cell-substratum contacts regulated by angiopoietin-1.</title>
        <authorList>
            <person name="Fukuhara S."/>
            <person name="Sako K."/>
            <person name="Minami T."/>
            <person name="Noda K."/>
            <person name="Kim H.Z."/>
            <person name="Kodama T."/>
            <person name="Shibuya M."/>
            <person name="Takakura N."/>
            <person name="Koh G.Y."/>
            <person name="Mochizuki N."/>
        </authorList>
    </citation>
    <scope>FUNCTION IN REGULATION OF ENDOTHELIAL CELL MIGRATION AND CELL SPREADING</scope>
</reference>
<reference key="14">
    <citation type="journal article" date="2008" name="Nat. Cell Biol.">
        <title>Angiopoietins assemble distinct Tie2 signalling complexes in endothelial cell-cell and cell-matrix contacts.</title>
        <authorList>
            <person name="Saharinen P."/>
            <person name="Eklund L."/>
            <person name="Miettinen J."/>
            <person name="Wirkkala R."/>
            <person name="Anisimov A."/>
            <person name="Winderlich M."/>
            <person name="Nottebaum A."/>
            <person name="Vestweber D."/>
            <person name="Deutsch U."/>
            <person name="Koh G.Y."/>
            <person name="Olsen B.R."/>
            <person name="Alitalo K."/>
        </authorList>
    </citation>
    <scope>FUNCTION IN REGULATION OF ENDOTHELIAL CELL MIGRATION</scope>
</reference>
<reference key="15">
    <citation type="journal article" date="2009" name="Nat. Rev. Mol. Cell Biol.">
        <title>Control of vascular morphogenesis and homeostasis through the angiopoietin-Tie system.</title>
        <authorList>
            <person name="Augustin H.G."/>
            <person name="Koh G.Y."/>
            <person name="Thurston G."/>
            <person name="Alitalo K."/>
        </authorList>
    </citation>
    <scope>REVIEW</scope>
</reference>
<reference key="16">
    <citation type="journal article" date="2010" name="Histol. Histopathol.">
        <title>Angiopoietin-1/Tie2 receptor signaling in vascular quiescence and angiogenesis.</title>
        <authorList>
            <person name="Fukuhara S."/>
            <person name="Sako K."/>
            <person name="Noda K."/>
            <person name="Zhang J."/>
            <person name="Minami M."/>
            <person name="Mochizuki N."/>
        </authorList>
    </citation>
    <scope>REVIEW</scope>
</reference>
<reference key="17">
    <citation type="journal article" date="2010" name="Nat. Rev. Cancer">
        <title>Targeting the ANGPT-TIE2 pathway in malignancy.</title>
        <authorList>
            <person name="Huang H."/>
            <person name="Bhat A."/>
            <person name="Woodnutt G."/>
            <person name="Lappe R."/>
        </authorList>
    </citation>
    <scope>REVIEW</scope>
</reference>
<reference key="18">
    <citation type="journal article" date="2014" name="J. Proteomics">
        <title>An enzyme assisted RP-RPLC approach for in-depth analysis of human liver phosphoproteome.</title>
        <authorList>
            <person name="Bian Y."/>
            <person name="Song C."/>
            <person name="Cheng K."/>
            <person name="Dong M."/>
            <person name="Wang F."/>
            <person name="Huang J."/>
            <person name="Sun D."/>
            <person name="Wang L."/>
            <person name="Ye M."/>
            <person name="Zou H."/>
        </authorList>
    </citation>
    <scope>IDENTIFICATION BY MASS SPECTROMETRY [LARGE SCALE ANALYSIS]</scope>
    <source>
        <tissue>Liver</tissue>
    </source>
</reference>
<reference key="19">
    <citation type="journal article" date="2018" name="Sci. Rep.">
        <title>Angiopoietins bind thrombomodulin and inhibit its function as a thrombin cofactor.</title>
        <authorList>
            <person name="Daly C."/>
            <person name="Qian X."/>
            <person name="Castanaro C."/>
            <person name="Pasnikowski E."/>
            <person name="Jiang X."/>
            <person name="Thomson B.R."/>
            <person name="Quaggin S.E."/>
            <person name="Papadopoulos N."/>
            <person name="Wei Y."/>
            <person name="Rudge J.S."/>
            <person name="Thurston G."/>
            <person name="Yancopoulos G.D."/>
            <person name="Davis S."/>
        </authorList>
    </citation>
    <scope>INTERACTION WITH THBD</scope>
</reference>
<reference key="20">
    <citation type="journal article" date="2018" name="J. Allergy Clin. Immunol.">
        <title>Mutation of the angiopoietin-1 gene (ANGPT1) associates with a new type of hereditary angioedema.</title>
        <authorList>
            <person name="Bafunno V."/>
            <person name="Firinu D."/>
            <person name="D'Apolito M."/>
            <person name="Cordisco G."/>
            <person name="Loffredo S."/>
            <person name="Leccese A."/>
            <person name="Bova M."/>
            <person name="Barca M.P."/>
            <person name="Santacroce R."/>
            <person name="Cicardi M."/>
            <person name="Del Giacco S."/>
            <person name="Margaglione M."/>
        </authorList>
    </citation>
    <scope>VARIANTS HAE5 SER-119; CYS-225 AND GLN-494</scope>
    <scope>INVOLVEMENT IN HAE5</scope>
    <scope>SUBUNIT</scope>
    <scope>INTERACTION WITH TEK</scope>
    <scope>CHARACTERIZATION OF VARIANTS HAE5 SER-119; CYS-225 AND GLN-494</scope>
</reference>
<reference key="21">
    <citation type="journal article" date="2019" name="Clin. Exp. Allergy">
        <title>Angiopoietin-1 haploinsufficiency affects the endothelial barrier and causes hereditary angioedema.</title>
        <authorList>
            <person name="d'Apolito M."/>
            <person name="Santacroce R."/>
            <person name="Colia A.L."/>
            <person name="Cordisco G."/>
            <person name="Maffione A.B."/>
            <person name="Margaglione M."/>
        </authorList>
    </citation>
    <scope>VARIANT HAE5 SER-119</scope>
    <scope>FUNCTION</scope>
    <scope>INTERACTION WITH TEK</scope>
    <scope>CHARACTERIZATION OF VARIANT HAE5 SER-119</scope>
</reference>
<proteinExistence type="evidence at protein level"/>
<evidence type="ECO:0000250" key="1">
    <source>
        <dbReference type="UniProtKB" id="O08538"/>
    </source>
</evidence>
<evidence type="ECO:0000255" key="2"/>
<evidence type="ECO:0000255" key="3">
    <source>
        <dbReference type="PROSITE-ProRule" id="PRU00739"/>
    </source>
</evidence>
<evidence type="ECO:0000269" key="4">
    <source>
    </source>
</evidence>
<evidence type="ECO:0000269" key="5">
    <source>
    </source>
</evidence>
<evidence type="ECO:0000269" key="6">
    <source>
    </source>
</evidence>
<evidence type="ECO:0000269" key="7">
    <source>
    </source>
</evidence>
<evidence type="ECO:0000269" key="8">
    <source>
    </source>
</evidence>
<evidence type="ECO:0000269" key="9">
    <source>
    </source>
</evidence>
<evidence type="ECO:0000269" key="10">
    <source>
    </source>
</evidence>
<evidence type="ECO:0000269" key="11">
    <source>
    </source>
</evidence>
<evidence type="ECO:0000269" key="12">
    <source>
    </source>
</evidence>
<evidence type="ECO:0000303" key="13">
    <source>
    </source>
</evidence>
<evidence type="ECO:0000303" key="14">
    <source ref="2"/>
</evidence>
<evidence type="ECO:0000303" key="15">
    <source ref="3"/>
</evidence>
<evidence type="ECO:0000305" key="16"/>
<evidence type="ECO:0007829" key="17">
    <source>
        <dbReference type="PDB" id="4EPU"/>
    </source>
</evidence>
<name>ANGP1_HUMAN</name>
<feature type="signal peptide" evidence="2">
    <location>
        <begin position="1"/>
        <end position="15"/>
    </location>
</feature>
<feature type="chain" id="PRO_0000009110" description="Angiopoietin-1">
    <location>
        <begin position="16"/>
        <end position="498"/>
    </location>
</feature>
<feature type="domain" description="Fibrinogen C-terminal" evidence="3">
    <location>
        <begin position="277"/>
        <end position="497"/>
    </location>
</feature>
<feature type="coiled-coil region" evidence="2">
    <location>
        <begin position="81"/>
        <end position="119"/>
    </location>
</feature>
<feature type="coiled-coil region" evidence="2">
    <location>
        <begin position="153"/>
        <end position="261"/>
    </location>
</feature>
<feature type="glycosylation site" description="N-linked (GlcNAc...) asparagine" evidence="2">
    <location>
        <position position="92"/>
    </location>
</feature>
<feature type="glycosylation site" description="N-linked (GlcNAc...) asparagine" evidence="2">
    <location>
        <position position="122"/>
    </location>
</feature>
<feature type="glycosylation site" description="N-linked (GlcNAc...) asparagine" evidence="2">
    <location>
        <position position="154"/>
    </location>
</feature>
<feature type="glycosylation site" description="N-linked (GlcNAc...) asparagine" evidence="2">
    <location>
        <position position="243"/>
    </location>
</feature>
<feature type="glycosylation site" description="N-linked (GlcNAc...) asparagine" evidence="2">
    <location>
        <position position="295"/>
    </location>
</feature>
<feature type="disulfide bond" evidence="3">
    <location>
        <begin position="286"/>
        <end position="315"/>
    </location>
</feature>
<feature type="disulfide bond" evidence="3">
    <location>
        <begin position="439"/>
        <end position="452"/>
    </location>
</feature>
<feature type="splice variant" id="VSP_046324" description="In isoform 2." evidence="13 14 15">
    <location>
        <position position="269"/>
    </location>
</feature>
<feature type="sequence variant" id="VAR_085814" description="In HAE5; decreased oligomerization; decreased interaction with TEK; fails to form proper cell-cell adhesions in an in vitro model of endothelial cell barrier; dbSNP:rs764987358." evidence="8 10">
    <original>A</original>
    <variation>S</variation>
    <location>
        <position position="119"/>
    </location>
</feature>
<feature type="sequence variant" id="VAR_085815" description="In HAE5; uncertain significance; does not affect oligomerization; does not affect interaction with TEK; dbSNP:rs777414772." evidence="8">
    <original>R</original>
    <variation>C</variation>
    <location>
        <position position="225"/>
    </location>
</feature>
<feature type="sequence variant" id="VAR_069165" description="In dbSNP:rs73701083.">
    <original>L</original>
    <variation>P</variation>
    <location>
        <position position="247"/>
    </location>
</feature>
<feature type="sequence variant" id="VAR_085816" description="In HAE5; uncertain significance; does not affect oligomerization; does not affect interaction with TEK; dbSNP:rs377442517." evidence="8">
    <original>R</original>
    <variation>Q</variation>
    <location>
        <position position="494"/>
    </location>
</feature>
<feature type="helix" evidence="17">
    <location>
        <begin position="286"/>
        <end position="291"/>
    </location>
</feature>
<feature type="strand" evidence="17">
    <location>
        <begin position="298"/>
        <end position="302"/>
    </location>
</feature>
<feature type="strand" evidence="17">
    <location>
        <begin position="311"/>
        <end position="316"/>
    </location>
</feature>
<feature type="helix" evidence="17">
    <location>
        <begin position="319"/>
        <end position="321"/>
    </location>
</feature>
<feature type="strand" evidence="17">
    <location>
        <begin position="324"/>
        <end position="333"/>
    </location>
</feature>
<feature type="helix" evidence="17">
    <location>
        <begin position="341"/>
        <end position="346"/>
    </location>
</feature>
<feature type="strand" evidence="17">
    <location>
        <begin position="353"/>
        <end position="356"/>
    </location>
</feature>
<feature type="helix" evidence="17">
    <location>
        <begin position="359"/>
        <end position="366"/>
    </location>
</feature>
<feature type="strand" evidence="17">
    <location>
        <begin position="371"/>
        <end position="378"/>
    </location>
</feature>
<feature type="strand" evidence="17">
    <location>
        <begin position="384"/>
        <end position="394"/>
    </location>
</feature>
<feature type="helix" evidence="17">
    <location>
        <begin position="397"/>
        <end position="399"/>
    </location>
</feature>
<feature type="strand" evidence="17">
    <location>
        <begin position="403"/>
        <end position="412"/>
    </location>
</feature>
<feature type="strand" evidence="17">
    <location>
        <begin position="433"/>
        <end position="437"/>
    </location>
</feature>
<feature type="helix" evidence="17">
    <location>
        <begin position="439"/>
        <end position="443"/>
    </location>
</feature>
<feature type="strand" evidence="17">
    <location>
        <begin position="450"/>
        <end position="452"/>
    </location>
</feature>
<feature type="strand" evidence="17">
    <location>
        <begin position="454"/>
        <end position="456"/>
    </location>
</feature>
<feature type="turn" evidence="17">
    <location>
        <begin position="463"/>
        <end position="467"/>
    </location>
</feature>
<feature type="strand" evidence="17">
    <location>
        <begin position="473"/>
        <end position="476"/>
    </location>
</feature>
<feature type="turn" evidence="17">
    <location>
        <begin position="477"/>
        <end position="479"/>
    </location>
</feature>
<feature type="strand" evidence="17">
    <location>
        <begin position="487"/>
        <end position="495"/>
    </location>
</feature>
<organism>
    <name type="scientific">Homo sapiens</name>
    <name type="common">Human</name>
    <dbReference type="NCBI Taxonomy" id="9606"/>
    <lineage>
        <taxon>Eukaryota</taxon>
        <taxon>Metazoa</taxon>
        <taxon>Chordata</taxon>
        <taxon>Craniata</taxon>
        <taxon>Vertebrata</taxon>
        <taxon>Euteleostomi</taxon>
        <taxon>Mammalia</taxon>
        <taxon>Eutheria</taxon>
        <taxon>Euarchontoglires</taxon>
        <taxon>Primates</taxon>
        <taxon>Haplorrhini</taxon>
        <taxon>Catarrhini</taxon>
        <taxon>Hominidae</taxon>
        <taxon>Homo</taxon>
    </lineage>
</organism>